<sequence length="364" mass="39456">MPHSYPALSAEQKKELSDIALRIVAPGKGILAADESVGSMAKRLSQIGVENTEENRRLYRQVLFSADDRVKKCIGGVIFFHETLYQKDDNGVPFVRTIQDKGIVVGIKVDKGVVPLAGTDGETTTQGLDGLSERCAQYKKDGADFAKWRCVLKISERTPSALAILENANVLARYASICQQNGIVPIVEPEILPDGDHDLKRCQYVTEKVLAAVYKALSDHHVYLEGTLLKPNMVTPGHACPIKYTPEEIAMATVTALRRTVPPAVPGVTFLSGGQSEEEASFNLNAINRCPLPRPWALTFSYGRALQASALNAWRGQRDNAGAATEEFIKRAEVNGLAAQGKYEGSGEDGGAAAQSLYIANHAY</sequence>
<keyword id="KW-0002">3D-structure</keyword>
<keyword id="KW-0007">Acetylation</keyword>
<keyword id="KW-0324">Glycolysis</keyword>
<keyword id="KW-0456">Lyase</keyword>
<keyword id="KW-0597">Phosphoprotein</keyword>
<keyword id="KW-1267">Proteomics identification</keyword>
<keyword id="KW-1185">Reference proteome</keyword>
<keyword id="KW-0704">Schiff base</keyword>
<accession>P09972</accession>
<accession>B2R5R3</accession>
<accession>Q3SYL3</accession>
<accession>Q6FH94</accession>
<accession>Q6P0L5</accession>
<protein>
    <recommendedName>
        <fullName>Fructose-bisphosphate aldolase C</fullName>
        <ecNumber>4.1.2.13</ecNumber>
    </recommendedName>
    <alternativeName>
        <fullName>Brain-type aldolase</fullName>
    </alternativeName>
</protein>
<organism>
    <name type="scientific">Homo sapiens</name>
    <name type="common">Human</name>
    <dbReference type="NCBI Taxonomy" id="9606"/>
    <lineage>
        <taxon>Eukaryota</taxon>
        <taxon>Metazoa</taxon>
        <taxon>Chordata</taxon>
        <taxon>Craniata</taxon>
        <taxon>Vertebrata</taxon>
        <taxon>Euteleostomi</taxon>
        <taxon>Mammalia</taxon>
        <taxon>Eutheria</taxon>
        <taxon>Euarchontoglires</taxon>
        <taxon>Primates</taxon>
        <taxon>Haplorrhini</taxon>
        <taxon>Catarrhini</taxon>
        <taxon>Hominidae</taxon>
        <taxon>Homo</taxon>
    </lineage>
</organism>
<feature type="chain" id="PRO_0000216947" description="Fructose-bisphosphate aldolase C">
    <location>
        <begin position="1"/>
        <end position="364"/>
    </location>
</feature>
<feature type="active site" description="Proton acceptor" evidence="1">
    <location>
        <position position="188"/>
    </location>
</feature>
<feature type="active site" description="Schiff-base intermediate with dihydroxyacetone-P">
    <location>
        <position position="230"/>
    </location>
</feature>
<feature type="binding site">
    <location>
        <position position="56"/>
    </location>
    <ligand>
        <name>substrate</name>
    </ligand>
</feature>
<feature type="binding site">
    <location>
        <position position="147"/>
    </location>
    <ligand>
        <name>substrate</name>
    </ligand>
</feature>
<feature type="site" description="Necessary for preference for fructose 1,6-bisphosphate over fructose 1-phosphate">
    <location>
        <position position="364"/>
    </location>
</feature>
<feature type="modified residue" description="Phosphotyrosine" evidence="2">
    <location>
        <position position="5"/>
    </location>
</feature>
<feature type="modified residue" description="Phosphoserine" evidence="8 9">
    <location>
        <position position="36"/>
    </location>
</feature>
<feature type="modified residue" description="Phosphoserine" evidence="9">
    <location>
        <position position="39"/>
    </location>
</feature>
<feature type="modified residue" description="Phosphoserine" evidence="9">
    <location>
        <position position="45"/>
    </location>
</feature>
<feature type="modified residue" description="N6-acetyllysine" evidence="7">
    <location>
        <position position="111"/>
    </location>
</feature>
<feature type="modified residue" description="Phosphoserine" evidence="2">
    <location>
        <position position="132"/>
    </location>
</feature>
<feature type="sequence conflict" description="In Ref. 2; CAA30270." evidence="6" ref="2">
    <original>L</original>
    <variation>V</variation>
    <location>
        <position position="311"/>
    </location>
</feature>
<feature type="helix" evidence="10">
    <location>
        <begin position="10"/>
        <end position="23"/>
    </location>
</feature>
<feature type="strand" evidence="10">
    <location>
        <begin position="29"/>
        <end position="33"/>
    </location>
</feature>
<feature type="helix" evidence="10">
    <location>
        <begin position="37"/>
        <end position="45"/>
    </location>
</feature>
<feature type="helix" evidence="10">
    <location>
        <begin position="53"/>
        <end position="64"/>
    </location>
</feature>
<feature type="helix" evidence="10">
    <location>
        <begin position="68"/>
        <end position="70"/>
    </location>
</feature>
<feature type="turn" evidence="10">
    <location>
        <begin position="71"/>
        <end position="73"/>
    </location>
</feature>
<feature type="strand" evidence="10">
    <location>
        <begin position="74"/>
        <end position="79"/>
    </location>
</feature>
<feature type="helix" evidence="10">
    <location>
        <begin position="82"/>
        <end position="85"/>
    </location>
</feature>
<feature type="helix" evidence="10">
    <location>
        <begin position="94"/>
        <end position="100"/>
    </location>
</feature>
<feature type="strand" evidence="10">
    <location>
        <begin position="104"/>
        <end position="108"/>
    </location>
</feature>
<feature type="strand" evidence="10">
    <location>
        <begin position="113"/>
        <end position="115"/>
    </location>
</feature>
<feature type="strand" evidence="10">
    <location>
        <begin position="119"/>
        <end position="121"/>
    </location>
</feature>
<feature type="strand" evidence="10">
    <location>
        <begin position="123"/>
        <end position="125"/>
    </location>
</feature>
<feature type="helix" evidence="10">
    <location>
        <begin position="131"/>
        <end position="140"/>
    </location>
</feature>
<feature type="strand" evidence="10">
    <location>
        <begin position="145"/>
        <end position="152"/>
    </location>
</feature>
<feature type="helix" evidence="10">
    <location>
        <begin position="161"/>
        <end position="179"/>
    </location>
</feature>
<feature type="turn" evidence="10">
    <location>
        <begin position="180"/>
        <end position="182"/>
    </location>
</feature>
<feature type="strand" evidence="10">
    <location>
        <begin position="184"/>
        <end position="191"/>
    </location>
</feature>
<feature type="helix" evidence="10">
    <location>
        <begin position="199"/>
        <end position="219"/>
    </location>
</feature>
<feature type="helix" evidence="10">
    <location>
        <begin position="224"/>
        <end position="226"/>
    </location>
</feature>
<feature type="helix" evidence="10">
    <location>
        <begin position="246"/>
        <end position="257"/>
    </location>
</feature>
<feature type="turn" evidence="10">
    <location>
        <begin position="258"/>
        <end position="260"/>
    </location>
</feature>
<feature type="strand" evidence="10">
    <location>
        <begin position="267"/>
        <end position="271"/>
    </location>
</feature>
<feature type="helix" evidence="10">
    <location>
        <begin position="277"/>
        <end position="288"/>
    </location>
</feature>
<feature type="strand" evidence="10">
    <location>
        <begin position="295"/>
        <end position="303"/>
    </location>
</feature>
<feature type="helix" evidence="10">
    <location>
        <begin position="304"/>
        <end position="314"/>
    </location>
</feature>
<feature type="helix" evidence="10">
    <location>
        <begin position="321"/>
        <end position="338"/>
    </location>
</feature>
<feature type="turn" evidence="10">
    <location>
        <begin position="339"/>
        <end position="341"/>
    </location>
</feature>
<proteinExistence type="evidence at protein level"/>
<comment type="catalytic activity">
    <reaction evidence="5">
        <text>beta-D-fructose 1,6-bisphosphate = D-glyceraldehyde 3-phosphate + dihydroxyacetone phosphate</text>
        <dbReference type="Rhea" id="RHEA:14729"/>
        <dbReference type="ChEBI" id="CHEBI:32966"/>
        <dbReference type="ChEBI" id="CHEBI:57642"/>
        <dbReference type="ChEBI" id="CHEBI:59776"/>
        <dbReference type="EC" id="4.1.2.13"/>
    </reaction>
</comment>
<comment type="biophysicochemical properties">
    <kinetics>
        <KM evidence="5">10.7 uM for fructose 1,6-bisphosphate</KM>
        <KM evidence="5">16 mM for fructose 1-phosphate</KM>
    </kinetics>
</comment>
<comment type="pathway">
    <text>Carbohydrate degradation; glycolysis; D-glyceraldehyde 3-phosphate and glycerone phosphate from D-glucose: step 4/4.</text>
</comment>
<comment type="subunit">
    <text evidence="3 4">Homotetramer. Interacts with ATP6V1E1. May interact with PLD2.</text>
</comment>
<comment type="interaction">
    <interactant intactId="EBI-2952751">
        <id>P09972</id>
    </interactant>
    <interactant intactId="EBI-709613">
        <id>P04075</id>
        <label>ALDOA</label>
    </interactant>
    <organismsDiffer>false</organismsDiffer>
    <experiments>5</experiments>
</comment>
<comment type="interaction">
    <interactant intactId="EBI-2952751">
        <id>P09972</id>
    </interactant>
    <interactant intactId="EBI-10194102">
        <id>P04075-2</id>
        <label>ALDOA</label>
    </interactant>
    <organismsDiffer>false</organismsDiffer>
    <experiments>6</experiments>
</comment>
<comment type="interaction">
    <interactant intactId="EBI-2952751">
        <id>P09972</id>
    </interactant>
    <interactant intactId="EBI-11954519">
        <id>Q49AR9</id>
        <label>ANKS1A</label>
    </interactant>
    <organismsDiffer>false</organismsDiffer>
    <experiments>3</experiments>
</comment>
<comment type="interaction">
    <interactant intactId="EBI-2952751">
        <id>P09972</id>
    </interactant>
    <interactant intactId="EBI-349854">
        <id>P13569</id>
        <label>CFTR</label>
    </interactant>
    <organismsDiffer>false</organismsDiffer>
    <experiments>8</experiments>
</comment>
<comment type="interaction">
    <interactant intactId="EBI-2952751">
        <id>P09972</id>
    </interactant>
    <interactant intactId="EBI-739832">
        <id>Q8TBB1</id>
        <label>LNX1</label>
    </interactant>
    <organismsDiffer>false</organismsDiffer>
    <experiments>6</experiments>
</comment>
<comment type="miscellaneous">
    <text>In vertebrates, three forms of this ubiquitous glycolytic enzyme are found, aldolase A in muscle, aldolase B in liver and aldolase C in brain.</text>
</comment>
<comment type="similarity">
    <text evidence="6">Belongs to the class I fructose-bisphosphate aldolase family.</text>
</comment>
<comment type="sequence caution" evidence="6">
    <conflict type="erroneous initiation">
        <sequence resource="EMBL-CDS" id="AAI03761"/>
    </conflict>
</comment>
<gene>
    <name type="primary">ALDOC</name>
    <name type="synonym">ALDC</name>
</gene>
<reference key="1">
    <citation type="journal article" date="1987" name="Biochimie">
        <title>The complete amino acid sequence of the human aldolase C isozyme derived from genomic clones.</title>
        <authorList>
            <person name="Rottmann W.H."/>
            <person name="Deselms K.R."/>
            <person name="Niclas J."/>
            <person name="Camerato T."/>
            <person name="Holman P.S."/>
            <person name="Green C.J."/>
            <person name="Tolan D.R."/>
        </authorList>
    </citation>
    <scope>NUCLEOTIDE SEQUENCE [GENOMIC DNA]</scope>
</reference>
<reference key="2">
    <citation type="journal article" date="1988" name="Nucleic Acids Res.">
        <title>The complete nucleotide sequence of the gene coding for the human aldolase C.</title>
        <authorList>
            <person name="Buono P."/>
            <person name="Paolella G."/>
            <person name="Mancini F.P."/>
            <person name="Izzo P."/>
            <person name="Salvatore F."/>
        </authorList>
    </citation>
    <scope>NUCLEOTIDE SEQUENCE [GENOMIC DNA]</scope>
</reference>
<reference key="3">
    <citation type="journal article" date="1990" name="Eur. J. Biochem.">
        <title>Characterization of the transcription-initiation site and of the promoter region within the 5' flanking region of the human aldolase C gene.</title>
        <authorList>
            <person name="Buono P."/>
            <person name="Mancini F.P."/>
            <person name="Izzo P."/>
            <person name="Salvatore F."/>
        </authorList>
    </citation>
    <scope>NUCLEOTIDE SEQUENCE [GENOMIC DNA]</scope>
</reference>
<reference key="4">
    <citation type="submission" date="1998-03" db="EMBL/GenBank/DDBJ databases">
        <authorList>
            <person name="Yu W."/>
            <person name="Gibbs R.A."/>
        </authorList>
    </citation>
    <scope>NUCLEOTIDE SEQUENCE [LARGE SCALE MRNA]</scope>
    <source>
        <tissue>Brain</tissue>
    </source>
</reference>
<reference key="5">
    <citation type="submission" date="2003-05" db="EMBL/GenBank/DDBJ databases">
        <title>Cloning of human full-length CDSs in BD Creator(TM) system donor vector.</title>
        <authorList>
            <person name="Kalnine N."/>
            <person name="Chen X."/>
            <person name="Rolfs A."/>
            <person name="Halleck A."/>
            <person name="Hines L."/>
            <person name="Eisenstein S."/>
            <person name="Koundinya M."/>
            <person name="Raphael J."/>
            <person name="Moreira D."/>
            <person name="Kelley T."/>
            <person name="LaBaer J."/>
            <person name="Lin Y."/>
            <person name="Phelan M."/>
            <person name="Farmer A."/>
        </authorList>
    </citation>
    <scope>NUCLEOTIDE SEQUENCE [LARGE SCALE MRNA]</scope>
</reference>
<reference key="6">
    <citation type="submission" date="2004-06" db="EMBL/GenBank/DDBJ databases">
        <title>Cloning of human full open reading frames in Gateway(TM) system entry vector (pDONR201).</title>
        <authorList>
            <person name="Ebert L."/>
            <person name="Schick M."/>
            <person name="Neubert P."/>
            <person name="Schatten R."/>
            <person name="Henze S."/>
            <person name="Korn B."/>
        </authorList>
    </citation>
    <scope>NUCLEOTIDE SEQUENCE [LARGE SCALE MRNA]</scope>
</reference>
<reference key="7">
    <citation type="journal article" date="2004" name="Nat. Genet.">
        <title>Complete sequencing and characterization of 21,243 full-length human cDNAs.</title>
        <authorList>
            <person name="Ota T."/>
            <person name="Suzuki Y."/>
            <person name="Nishikawa T."/>
            <person name="Otsuki T."/>
            <person name="Sugiyama T."/>
            <person name="Irie R."/>
            <person name="Wakamatsu A."/>
            <person name="Hayashi K."/>
            <person name="Sato H."/>
            <person name="Nagai K."/>
            <person name="Kimura K."/>
            <person name="Makita H."/>
            <person name="Sekine M."/>
            <person name="Obayashi M."/>
            <person name="Nishi T."/>
            <person name="Shibahara T."/>
            <person name="Tanaka T."/>
            <person name="Ishii S."/>
            <person name="Yamamoto J."/>
            <person name="Saito K."/>
            <person name="Kawai Y."/>
            <person name="Isono Y."/>
            <person name="Nakamura Y."/>
            <person name="Nagahari K."/>
            <person name="Murakami K."/>
            <person name="Yasuda T."/>
            <person name="Iwayanagi T."/>
            <person name="Wagatsuma M."/>
            <person name="Shiratori A."/>
            <person name="Sudo H."/>
            <person name="Hosoiri T."/>
            <person name="Kaku Y."/>
            <person name="Kodaira H."/>
            <person name="Kondo H."/>
            <person name="Sugawara M."/>
            <person name="Takahashi M."/>
            <person name="Kanda K."/>
            <person name="Yokoi T."/>
            <person name="Furuya T."/>
            <person name="Kikkawa E."/>
            <person name="Omura Y."/>
            <person name="Abe K."/>
            <person name="Kamihara K."/>
            <person name="Katsuta N."/>
            <person name="Sato K."/>
            <person name="Tanikawa M."/>
            <person name="Yamazaki M."/>
            <person name="Ninomiya K."/>
            <person name="Ishibashi T."/>
            <person name="Yamashita H."/>
            <person name="Murakawa K."/>
            <person name="Fujimori K."/>
            <person name="Tanai H."/>
            <person name="Kimata M."/>
            <person name="Watanabe M."/>
            <person name="Hiraoka S."/>
            <person name="Chiba Y."/>
            <person name="Ishida S."/>
            <person name="Ono Y."/>
            <person name="Takiguchi S."/>
            <person name="Watanabe S."/>
            <person name="Yosida M."/>
            <person name="Hotuta T."/>
            <person name="Kusano J."/>
            <person name="Kanehori K."/>
            <person name="Takahashi-Fujii A."/>
            <person name="Hara H."/>
            <person name="Tanase T.-O."/>
            <person name="Nomura Y."/>
            <person name="Togiya S."/>
            <person name="Komai F."/>
            <person name="Hara R."/>
            <person name="Takeuchi K."/>
            <person name="Arita M."/>
            <person name="Imose N."/>
            <person name="Musashino K."/>
            <person name="Yuuki H."/>
            <person name="Oshima A."/>
            <person name="Sasaki N."/>
            <person name="Aotsuka S."/>
            <person name="Yoshikawa Y."/>
            <person name="Matsunawa H."/>
            <person name="Ichihara T."/>
            <person name="Shiohata N."/>
            <person name="Sano S."/>
            <person name="Moriya S."/>
            <person name="Momiyama H."/>
            <person name="Satoh N."/>
            <person name="Takami S."/>
            <person name="Terashima Y."/>
            <person name="Suzuki O."/>
            <person name="Nakagawa S."/>
            <person name="Senoh A."/>
            <person name="Mizoguchi H."/>
            <person name="Goto Y."/>
            <person name="Shimizu F."/>
            <person name="Wakebe H."/>
            <person name="Hishigaki H."/>
            <person name="Watanabe T."/>
            <person name="Sugiyama A."/>
            <person name="Takemoto M."/>
            <person name="Kawakami B."/>
            <person name="Yamazaki M."/>
            <person name="Watanabe K."/>
            <person name="Kumagai A."/>
            <person name="Itakura S."/>
            <person name="Fukuzumi Y."/>
            <person name="Fujimori Y."/>
            <person name="Komiyama M."/>
            <person name="Tashiro H."/>
            <person name="Tanigami A."/>
            <person name="Fujiwara T."/>
            <person name="Ono T."/>
            <person name="Yamada K."/>
            <person name="Fujii Y."/>
            <person name="Ozaki K."/>
            <person name="Hirao M."/>
            <person name="Ohmori Y."/>
            <person name="Kawabata A."/>
            <person name="Hikiji T."/>
            <person name="Kobatake N."/>
            <person name="Inagaki H."/>
            <person name="Ikema Y."/>
            <person name="Okamoto S."/>
            <person name="Okitani R."/>
            <person name="Kawakami T."/>
            <person name="Noguchi S."/>
            <person name="Itoh T."/>
            <person name="Shigeta K."/>
            <person name="Senba T."/>
            <person name="Matsumura K."/>
            <person name="Nakajima Y."/>
            <person name="Mizuno T."/>
            <person name="Morinaga M."/>
            <person name="Sasaki M."/>
            <person name="Togashi T."/>
            <person name="Oyama M."/>
            <person name="Hata H."/>
            <person name="Watanabe M."/>
            <person name="Komatsu T."/>
            <person name="Mizushima-Sugano J."/>
            <person name="Satoh T."/>
            <person name="Shirai Y."/>
            <person name="Takahashi Y."/>
            <person name="Nakagawa K."/>
            <person name="Okumura K."/>
            <person name="Nagase T."/>
            <person name="Nomura N."/>
            <person name="Kikuchi H."/>
            <person name="Masuho Y."/>
            <person name="Yamashita R."/>
            <person name="Nakai K."/>
            <person name="Yada T."/>
            <person name="Nakamura Y."/>
            <person name="Ohara O."/>
            <person name="Isogai T."/>
            <person name="Sugano S."/>
        </authorList>
    </citation>
    <scope>NUCLEOTIDE SEQUENCE [LARGE SCALE MRNA]</scope>
    <source>
        <tissue>Cerebellum</tissue>
    </source>
</reference>
<reference key="8">
    <citation type="submission" date="2005-07" db="EMBL/GenBank/DDBJ databases">
        <authorList>
            <person name="Mural R.J."/>
            <person name="Istrail S."/>
            <person name="Sutton G.G."/>
            <person name="Florea L."/>
            <person name="Halpern A.L."/>
            <person name="Mobarry C.M."/>
            <person name="Lippert R."/>
            <person name="Walenz B."/>
            <person name="Shatkay H."/>
            <person name="Dew I."/>
            <person name="Miller J.R."/>
            <person name="Flanigan M.J."/>
            <person name="Edwards N.J."/>
            <person name="Bolanos R."/>
            <person name="Fasulo D."/>
            <person name="Halldorsson B.V."/>
            <person name="Hannenhalli S."/>
            <person name="Turner R."/>
            <person name="Yooseph S."/>
            <person name="Lu F."/>
            <person name="Nusskern D.R."/>
            <person name="Shue B.C."/>
            <person name="Zheng X.H."/>
            <person name="Zhong F."/>
            <person name="Delcher A.L."/>
            <person name="Huson D.H."/>
            <person name="Kravitz S.A."/>
            <person name="Mouchard L."/>
            <person name="Reinert K."/>
            <person name="Remington K.A."/>
            <person name="Clark A.G."/>
            <person name="Waterman M.S."/>
            <person name="Eichler E.E."/>
            <person name="Adams M.D."/>
            <person name="Hunkapiller M.W."/>
            <person name="Myers E.W."/>
            <person name="Venter J.C."/>
        </authorList>
    </citation>
    <scope>NUCLEOTIDE SEQUENCE [LARGE SCALE GENOMIC DNA]</scope>
</reference>
<reference key="9">
    <citation type="journal article" date="2004" name="Genome Res.">
        <title>The status, quality, and expansion of the NIH full-length cDNA project: the Mammalian Gene Collection (MGC).</title>
        <authorList>
            <consortium name="The MGC Project Team"/>
        </authorList>
    </citation>
    <scope>NUCLEOTIDE SEQUENCE [LARGE SCALE MRNA]</scope>
    <source>
        <tissue>Colon</tissue>
        <tissue>Eye</tissue>
        <tissue>Uterus</tissue>
    </source>
</reference>
<reference key="10">
    <citation type="journal article" date="2001" name="J. Biol. Chem.">
        <title>Interaction between aldolase and vacuolar H+-ATPase: evidence for direct coupling of glycolysis to the ATP-hydrolyzing proton pump.</title>
        <authorList>
            <person name="Lu M."/>
            <person name="Holliday L.S."/>
            <person name="Zhang L."/>
            <person name="Dunn W.A. Jr."/>
            <person name="Gluck S.L."/>
        </authorList>
    </citation>
    <scope>INTERACTION WITH ATP6V1E1</scope>
</reference>
<reference key="11">
    <citation type="journal article" date="2002" name="Biochemistry">
        <title>Phospholipase D2 directly interacts with aldolase via its PH domain.</title>
        <authorList>
            <person name="Kim J.H."/>
            <person name="Lee S."/>
            <person name="Kim J.H."/>
            <person name="Lee T.G."/>
            <person name="Hirata M."/>
            <person name="Suh P.-G."/>
            <person name="Ryu S.H."/>
        </authorList>
    </citation>
    <scope>INTERACTION WITH PLD2</scope>
</reference>
<reference key="12">
    <citation type="journal article" date="2009" name="Anal. Chem.">
        <title>Lys-N and trypsin cover complementary parts of the phosphoproteome in a refined SCX-based approach.</title>
        <authorList>
            <person name="Gauci S."/>
            <person name="Helbig A.O."/>
            <person name="Slijper M."/>
            <person name="Krijgsveld J."/>
            <person name="Heck A.J."/>
            <person name="Mohammed S."/>
        </authorList>
    </citation>
    <scope>ACETYLATION [LARGE SCALE ANALYSIS] AT LYS-111</scope>
    <scope>IDENTIFICATION BY MASS SPECTROMETRY [LARGE SCALE ANALYSIS]</scope>
</reference>
<reference key="13">
    <citation type="journal article" date="2011" name="BMC Syst. Biol.">
        <title>Initial characterization of the human central proteome.</title>
        <authorList>
            <person name="Burkard T.R."/>
            <person name="Planyavsky M."/>
            <person name="Kaupe I."/>
            <person name="Breitwieser F.P."/>
            <person name="Buerckstuemmer T."/>
            <person name="Bennett K.L."/>
            <person name="Superti-Furga G."/>
            <person name="Colinge J."/>
        </authorList>
    </citation>
    <scope>IDENTIFICATION BY MASS SPECTROMETRY [LARGE SCALE ANALYSIS]</scope>
</reference>
<reference key="14">
    <citation type="journal article" date="2013" name="J. Proteome Res.">
        <title>Toward a comprehensive characterization of a human cancer cell phosphoproteome.</title>
        <authorList>
            <person name="Zhou H."/>
            <person name="Di Palma S."/>
            <person name="Preisinger C."/>
            <person name="Peng M."/>
            <person name="Polat A.N."/>
            <person name="Heck A.J."/>
            <person name="Mohammed S."/>
        </authorList>
    </citation>
    <scope>PHOSPHORYLATION [LARGE SCALE ANALYSIS] AT SER-36</scope>
    <scope>IDENTIFICATION BY MASS SPECTROMETRY [LARGE SCALE ANALYSIS]</scope>
    <source>
        <tissue>Erythroleukemia</tissue>
    </source>
</reference>
<reference key="15">
    <citation type="journal article" date="2014" name="J. Proteomics">
        <title>An enzyme assisted RP-RPLC approach for in-depth analysis of human liver phosphoproteome.</title>
        <authorList>
            <person name="Bian Y."/>
            <person name="Song C."/>
            <person name="Cheng K."/>
            <person name="Dong M."/>
            <person name="Wang F."/>
            <person name="Huang J."/>
            <person name="Sun D."/>
            <person name="Wang L."/>
            <person name="Ye M."/>
            <person name="Zou H."/>
        </authorList>
    </citation>
    <scope>PHOSPHORYLATION [LARGE SCALE ANALYSIS] AT SER-36; SER-39 AND SER-45</scope>
    <scope>IDENTIFICATION BY MASS SPECTROMETRY [LARGE SCALE ANALYSIS]</scope>
    <source>
        <tissue>Liver</tissue>
    </source>
</reference>
<reference key="16">
    <citation type="journal article" date="2015" name="Proteomics">
        <title>N-terminome analysis of the human mitochondrial proteome.</title>
        <authorList>
            <person name="Vaca Jacome A.S."/>
            <person name="Rabilloud T."/>
            <person name="Schaeffer-Reiss C."/>
            <person name="Rompais M."/>
            <person name="Ayoub D."/>
            <person name="Lane L."/>
            <person name="Bairoch A."/>
            <person name="Van Dorsselaer A."/>
            <person name="Carapito C."/>
        </authorList>
    </citation>
    <scope>IDENTIFICATION BY MASS SPECTROMETRY [LARGE SCALE ANALYSIS]</scope>
</reference>
<reference key="17">
    <citation type="journal article" date="2004" name="Protein Sci.">
        <title>Structure of human brain fructose 1,6-(bis)phosphate aldolase: linking isozyme structure with function.</title>
        <authorList>
            <person name="Arakaki T.L."/>
            <person name="Pezza J.A."/>
            <person name="Cronin M.A."/>
            <person name="Hopkins C.E."/>
            <person name="Zimmer D.B."/>
            <person name="Tolan D.R."/>
            <person name="Allen K.N."/>
        </authorList>
    </citation>
    <scope>X-RAY CRYSTALLOGRAPHY (3.00 ANGSTROMS) OF 1-364</scope>
    <scope>CATALYTIC ACTIVITY</scope>
    <scope>BIOPHYSICOCHEMICAL PROPERTIES</scope>
</reference>
<dbReference type="EC" id="4.1.2.13"/>
<dbReference type="EMBL" id="X05196">
    <property type="protein sequence ID" value="CAA28825.1"/>
    <property type="molecule type" value="Genomic_DNA"/>
</dbReference>
<dbReference type="EMBL" id="X07292">
    <property type="protein sequence ID" value="CAA30270.1"/>
    <property type="molecule type" value="Genomic_DNA"/>
</dbReference>
<dbReference type="EMBL" id="AF054987">
    <property type="protein sequence ID" value="AAC09348.1"/>
    <property type="molecule type" value="mRNA"/>
</dbReference>
<dbReference type="EMBL" id="BT007006">
    <property type="protein sequence ID" value="AAP35652.1"/>
    <property type="molecule type" value="mRNA"/>
</dbReference>
<dbReference type="EMBL" id="CR541862">
    <property type="protein sequence ID" value="CAG46660.1"/>
    <property type="molecule type" value="mRNA"/>
</dbReference>
<dbReference type="EMBL" id="CR541881">
    <property type="protein sequence ID" value="CAG46679.1"/>
    <property type="molecule type" value="mRNA"/>
</dbReference>
<dbReference type="EMBL" id="AK312281">
    <property type="protein sequence ID" value="BAG35210.1"/>
    <property type="molecule type" value="mRNA"/>
</dbReference>
<dbReference type="EMBL" id="CH471159">
    <property type="protein sequence ID" value="EAW51104.1"/>
    <property type="molecule type" value="Genomic_DNA"/>
</dbReference>
<dbReference type="EMBL" id="BC003613">
    <property type="protein sequence ID" value="AAH03613.3"/>
    <property type="molecule type" value="mRNA"/>
</dbReference>
<dbReference type="EMBL" id="BC103760">
    <property type="protein sequence ID" value="AAI03761.1"/>
    <property type="status" value="ALT_INIT"/>
    <property type="molecule type" value="mRNA"/>
</dbReference>
<dbReference type="EMBL" id="BC065565">
    <property type="protein sequence ID" value="AAH65565.2"/>
    <property type="molecule type" value="mRNA"/>
</dbReference>
<dbReference type="EMBL" id="BC106925">
    <property type="protein sequence ID" value="AAI06926.1"/>
    <property type="molecule type" value="mRNA"/>
</dbReference>
<dbReference type="EMBL" id="BC106926">
    <property type="protein sequence ID" value="AAI06927.1"/>
    <property type="molecule type" value="mRNA"/>
</dbReference>
<dbReference type="CCDS" id="CCDS11236.1"/>
<dbReference type="PIR" id="A25861">
    <property type="entry name" value="ADHUC"/>
</dbReference>
<dbReference type="RefSeq" id="NP_005156.1">
    <property type="nucleotide sequence ID" value="NM_005165.3"/>
</dbReference>
<dbReference type="RefSeq" id="XP_005258006.1">
    <property type="nucleotide sequence ID" value="XM_005257949.3"/>
</dbReference>
<dbReference type="RefSeq" id="XP_011522858.1">
    <property type="nucleotide sequence ID" value="XM_011524556.3"/>
</dbReference>
<dbReference type="RefSeq" id="XP_054171518.1">
    <property type="nucleotide sequence ID" value="XM_054315543.1"/>
</dbReference>
<dbReference type="RefSeq" id="XP_054171519.1">
    <property type="nucleotide sequence ID" value="XM_054315544.1"/>
</dbReference>
<dbReference type="PDB" id="1XFB">
    <property type="method" value="X-ray"/>
    <property type="resolution" value="3.00 A"/>
    <property type="chains" value="A/B/C/D/E/F/G/H/I/J/K/L=1-364"/>
</dbReference>
<dbReference type="PDBsum" id="1XFB"/>
<dbReference type="SMR" id="P09972"/>
<dbReference type="BioGRID" id="106731">
    <property type="interactions" value="124"/>
</dbReference>
<dbReference type="FunCoup" id="P09972">
    <property type="interactions" value="949"/>
</dbReference>
<dbReference type="IntAct" id="P09972">
    <property type="interactions" value="30"/>
</dbReference>
<dbReference type="MINT" id="P09972"/>
<dbReference type="STRING" id="9606.ENSP00000378731"/>
<dbReference type="ChEMBL" id="CHEMBL4295709"/>
<dbReference type="GlyGen" id="P09972">
    <property type="glycosylation" value="2 sites, 1 O-linked glycan (1 site)"/>
</dbReference>
<dbReference type="iPTMnet" id="P09972"/>
<dbReference type="PhosphoSitePlus" id="P09972"/>
<dbReference type="SwissPalm" id="P09972"/>
<dbReference type="BioMuta" id="ALDOC"/>
<dbReference type="DMDM" id="113613"/>
<dbReference type="CPTAC" id="CPTAC-1372"/>
<dbReference type="CPTAC" id="CPTAC-1373"/>
<dbReference type="CPTAC" id="CPTAC-1374"/>
<dbReference type="CPTAC" id="CPTAC-1375"/>
<dbReference type="CPTAC" id="CPTAC-1376"/>
<dbReference type="jPOST" id="P09972"/>
<dbReference type="MassIVE" id="P09972"/>
<dbReference type="PaxDb" id="9606-ENSP00000226253"/>
<dbReference type="PeptideAtlas" id="P09972"/>
<dbReference type="PRIDE" id="P09972"/>
<dbReference type="ProteomicsDB" id="52287"/>
<dbReference type="Pumba" id="P09972"/>
<dbReference type="Antibodypedia" id="1111">
    <property type="antibodies" value="457 antibodies from 33 providers"/>
</dbReference>
<dbReference type="DNASU" id="230"/>
<dbReference type="Ensembl" id="ENST00000226253.9">
    <property type="protein sequence ID" value="ENSP00000226253.4"/>
    <property type="gene ID" value="ENSG00000109107.14"/>
</dbReference>
<dbReference type="Ensembl" id="ENST00000395321.6">
    <property type="protein sequence ID" value="ENSP00000378731.2"/>
    <property type="gene ID" value="ENSG00000109107.14"/>
</dbReference>
<dbReference type="GeneID" id="230"/>
<dbReference type="KEGG" id="hsa:230"/>
<dbReference type="MANE-Select" id="ENST00000226253.9">
    <property type="protein sequence ID" value="ENSP00000226253.4"/>
    <property type="RefSeq nucleotide sequence ID" value="NM_005165.3"/>
    <property type="RefSeq protein sequence ID" value="NP_005156.1"/>
</dbReference>
<dbReference type="UCSC" id="uc002hbp.4">
    <property type="organism name" value="human"/>
</dbReference>
<dbReference type="AGR" id="HGNC:418"/>
<dbReference type="CTD" id="230"/>
<dbReference type="DisGeNET" id="230"/>
<dbReference type="GeneCards" id="ALDOC"/>
<dbReference type="HGNC" id="HGNC:418">
    <property type="gene designation" value="ALDOC"/>
</dbReference>
<dbReference type="HPA" id="ENSG00000109107">
    <property type="expression patterns" value="Group enriched (brain, retina)"/>
</dbReference>
<dbReference type="MalaCards" id="ALDOC"/>
<dbReference type="MIM" id="103870">
    <property type="type" value="gene"/>
</dbReference>
<dbReference type="neXtProt" id="NX_P09972"/>
<dbReference type="OpenTargets" id="ENSG00000109107"/>
<dbReference type="PharmGKB" id="PA24711"/>
<dbReference type="VEuPathDB" id="HostDB:ENSG00000109107"/>
<dbReference type="eggNOG" id="KOG1557">
    <property type="taxonomic scope" value="Eukaryota"/>
</dbReference>
<dbReference type="GeneTree" id="ENSGT00950000182987"/>
<dbReference type="HOGENOM" id="CLU_031243_0_0_1"/>
<dbReference type="InParanoid" id="P09972"/>
<dbReference type="OMA" id="EHIANTE"/>
<dbReference type="OrthoDB" id="36455at2759"/>
<dbReference type="PAN-GO" id="P09972">
    <property type="GO annotations" value="4 GO annotations based on evolutionary models"/>
</dbReference>
<dbReference type="PhylomeDB" id="P09972"/>
<dbReference type="TreeFam" id="TF314203"/>
<dbReference type="BioCyc" id="MetaCyc:HS03200-MONOMER"/>
<dbReference type="PathwayCommons" id="P09972"/>
<dbReference type="Reactome" id="R-HSA-6798695">
    <property type="pathway name" value="Neutrophil degranulation"/>
</dbReference>
<dbReference type="Reactome" id="R-HSA-70171">
    <property type="pathway name" value="Glycolysis"/>
</dbReference>
<dbReference type="Reactome" id="R-HSA-70263">
    <property type="pathway name" value="Gluconeogenesis"/>
</dbReference>
<dbReference type="SABIO-RK" id="P09972"/>
<dbReference type="SignaLink" id="P09972"/>
<dbReference type="SIGNOR" id="P09972"/>
<dbReference type="UniPathway" id="UPA00109">
    <property type="reaction ID" value="UER00183"/>
</dbReference>
<dbReference type="BioGRID-ORCS" id="230">
    <property type="hits" value="35 hits in 1159 CRISPR screens"/>
</dbReference>
<dbReference type="CD-CODE" id="91857CE7">
    <property type="entry name" value="Nucleolus"/>
</dbReference>
<dbReference type="CD-CODE" id="FB4E32DD">
    <property type="entry name" value="Presynaptic clusters and postsynaptic densities"/>
</dbReference>
<dbReference type="ChiTaRS" id="ALDOC">
    <property type="organism name" value="human"/>
</dbReference>
<dbReference type="EvolutionaryTrace" id="P09972"/>
<dbReference type="GeneWiki" id="Aldolase_C"/>
<dbReference type="GenomeRNAi" id="230"/>
<dbReference type="Pharos" id="P09972">
    <property type="development level" value="Tbio"/>
</dbReference>
<dbReference type="PRO" id="PR:P09972"/>
<dbReference type="Proteomes" id="UP000005640">
    <property type="component" value="Chromosome 17"/>
</dbReference>
<dbReference type="RNAct" id="P09972">
    <property type="molecule type" value="protein"/>
</dbReference>
<dbReference type="Bgee" id="ENSG00000109107">
    <property type="expression patterns" value="Expressed in right hemisphere of cerebellum and 189 other cell types or tissues"/>
</dbReference>
<dbReference type="ExpressionAtlas" id="P09972">
    <property type="expression patterns" value="baseline and differential"/>
</dbReference>
<dbReference type="GO" id="GO:0005856">
    <property type="term" value="C:cytoskeleton"/>
    <property type="evidence" value="ECO:0000305"/>
    <property type="project" value="BHF-UCL"/>
</dbReference>
<dbReference type="GO" id="GO:0005829">
    <property type="term" value="C:cytosol"/>
    <property type="evidence" value="ECO:0000318"/>
    <property type="project" value="GO_Central"/>
</dbReference>
<dbReference type="GO" id="GO:0070062">
    <property type="term" value="C:extracellular exosome"/>
    <property type="evidence" value="ECO:0007005"/>
    <property type="project" value="UniProtKB"/>
</dbReference>
<dbReference type="GO" id="GO:0005576">
    <property type="term" value="C:extracellular region"/>
    <property type="evidence" value="ECO:0000304"/>
    <property type="project" value="Reactome"/>
</dbReference>
<dbReference type="GO" id="GO:1904813">
    <property type="term" value="C:ficolin-1-rich granule lumen"/>
    <property type="evidence" value="ECO:0000304"/>
    <property type="project" value="Reactome"/>
</dbReference>
<dbReference type="GO" id="GO:0034774">
    <property type="term" value="C:secretory granule lumen"/>
    <property type="evidence" value="ECO:0000304"/>
    <property type="project" value="Reactome"/>
</dbReference>
<dbReference type="GO" id="GO:1904724">
    <property type="term" value="C:tertiary granule lumen"/>
    <property type="evidence" value="ECO:0000304"/>
    <property type="project" value="Reactome"/>
</dbReference>
<dbReference type="GO" id="GO:0008092">
    <property type="term" value="F:cytoskeletal protein binding"/>
    <property type="evidence" value="ECO:0000314"/>
    <property type="project" value="BHF-UCL"/>
</dbReference>
<dbReference type="GO" id="GO:0004332">
    <property type="term" value="F:fructose-bisphosphate aldolase activity"/>
    <property type="evidence" value="ECO:0000314"/>
    <property type="project" value="UniProtKB"/>
</dbReference>
<dbReference type="GO" id="GO:0030855">
    <property type="term" value="P:epithelial cell differentiation"/>
    <property type="evidence" value="ECO:0000270"/>
    <property type="project" value="UniProtKB"/>
</dbReference>
<dbReference type="GO" id="GO:0030388">
    <property type="term" value="P:fructose 1,6-bisphosphate metabolic process"/>
    <property type="evidence" value="ECO:0000314"/>
    <property type="project" value="UniProtKB"/>
</dbReference>
<dbReference type="GO" id="GO:0006000">
    <property type="term" value="P:fructose metabolic process"/>
    <property type="evidence" value="ECO:0000304"/>
    <property type="project" value="ProtInc"/>
</dbReference>
<dbReference type="GO" id="GO:0006094">
    <property type="term" value="P:gluconeogenesis"/>
    <property type="evidence" value="ECO:0007669"/>
    <property type="project" value="Ensembl"/>
</dbReference>
<dbReference type="GO" id="GO:0006096">
    <property type="term" value="P:glycolytic process"/>
    <property type="evidence" value="ECO:0000318"/>
    <property type="project" value="GO_Central"/>
</dbReference>
<dbReference type="CDD" id="cd00948">
    <property type="entry name" value="FBP_aldolase_I_a"/>
    <property type="match status" value="1"/>
</dbReference>
<dbReference type="FunFam" id="3.20.20.70:FF:000205">
    <property type="entry name" value="Fructose-bisphosphate aldolase"/>
    <property type="match status" value="1"/>
</dbReference>
<dbReference type="FunFam" id="3.20.20.70:FF:000208">
    <property type="entry name" value="Fructose-bisphosphate aldolase"/>
    <property type="match status" value="1"/>
</dbReference>
<dbReference type="Gene3D" id="3.20.20.70">
    <property type="entry name" value="Aldolase class I"/>
    <property type="match status" value="1"/>
</dbReference>
<dbReference type="InterPro" id="IPR029768">
    <property type="entry name" value="Aldolase_I_AS"/>
</dbReference>
<dbReference type="InterPro" id="IPR013785">
    <property type="entry name" value="Aldolase_TIM"/>
</dbReference>
<dbReference type="InterPro" id="IPR000741">
    <property type="entry name" value="FBA_I"/>
</dbReference>
<dbReference type="NCBIfam" id="NF033379">
    <property type="entry name" value="FrucBisAld_I"/>
    <property type="match status" value="1"/>
</dbReference>
<dbReference type="PANTHER" id="PTHR11627">
    <property type="entry name" value="FRUCTOSE-BISPHOSPHATE ALDOLASE"/>
    <property type="match status" value="1"/>
</dbReference>
<dbReference type="Pfam" id="PF00274">
    <property type="entry name" value="Glycolytic"/>
    <property type="match status" value="1"/>
</dbReference>
<dbReference type="SUPFAM" id="SSF51569">
    <property type="entry name" value="Aldolase"/>
    <property type="match status" value="1"/>
</dbReference>
<dbReference type="PROSITE" id="PS00158">
    <property type="entry name" value="ALDOLASE_CLASS_I"/>
    <property type="match status" value="1"/>
</dbReference>
<evidence type="ECO:0000250" key="1"/>
<evidence type="ECO:0000250" key="2">
    <source>
        <dbReference type="UniProtKB" id="P05065"/>
    </source>
</evidence>
<evidence type="ECO:0000269" key="3">
    <source>
    </source>
</evidence>
<evidence type="ECO:0000269" key="4">
    <source>
    </source>
</evidence>
<evidence type="ECO:0000269" key="5">
    <source>
    </source>
</evidence>
<evidence type="ECO:0000305" key="6"/>
<evidence type="ECO:0007744" key="7">
    <source>
    </source>
</evidence>
<evidence type="ECO:0007744" key="8">
    <source>
    </source>
</evidence>
<evidence type="ECO:0007744" key="9">
    <source>
    </source>
</evidence>
<evidence type="ECO:0007829" key="10">
    <source>
        <dbReference type="PDB" id="1XFB"/>
    </source>
</evidence>
<name>ALDOC_HUMAN</name>